<evidence type="ECO:0000250" key="1"/>
<evidence type="ECO:0000305" key="2"/>
<comment type="function">
    <text evidence="1">Plays an essential role in total transketolase activity and cell proliferation in cancer cells; after transfection with anti-TKTL1 siRNA, total transketolase activity dramatically decreases and proliferation was significantly inhibited in cancer cells. Plays a pivotal role in carcinogenesis (By similarity).</text>
</comment>
<comment type="catalytic activity">
    <reaction>
        <text>D-sedoheptulose 7-phosphate + D-glyceraldehyde 3-phosphate = aldehydo-D-ribose 5-phosphate + D-xylulose 5-phosphate</text>
        <dbReference type="Rhea" id="RHEA:10508"/>
        <dbReference type="ChEBI" id="CHEBI:57483"/>
        <dbReference type="ChEBI" id="CHEBI:57737"/>
        <dbReference type="ChEBI" id="CHEBI:58273"/>
        <dbReference type="ChEBI" id="CHEBI:59776"/>
        <dbReference type="EC" id="2.2.1.1"/>
    </reaction>
</comment>
<comment type="cofactor">
    <cofactor evidence="1">
        <name>Mg(2+)</name>
        <dbReference type="ChEBI" id="CHEBI:18420"/>
    </cofactor>
    <cofactor evidence="1">
        <name>Ca(2+)</name>
        <dbReference type="ChEBI" id="CHEBI:29108"/>
    </cofactor>
    <cofactor evidence="1">
        <name>Mn(2+)</name>
        <dbReference type="ChEBI" id="CHEBI:29035"/>
    </cofactor>
    <cofactor evidence="1">
        <name>Co(2+)</name>
        <dbReference type="ChEBI" id="CHEBI:48828"/>
    </cofactor>
    <text evidence="1">Binds 1 Mg(2+) ion per subunit. Can also utilize other divalent metal cations, such as Ca(2+), Mn(2+) and Co(2+).</text>
</comment>
<comment type="cofactor">
    <cofactor evidence="1">
        <name>thiamine diphosphate</name>
        <dbReference type="ChEBI" id="CHEBI:58937"/>
    </cofactor>
    <text evidence="1">Binds 1 thiamine pyrophosphate per subunit.</text>
</comment>
<comment type="subunit">
    <text evidence="1">Homodimer.</text>
</comment>
<comment type="similarity">
    <text evidence="2">Belongs to the transketolase family.</text>
</comment>
<sequence length="626" mass="67501">MADSATLDATTVQVLQDLANRLRVHSIRATCASGSGHPTSCCSAAEIVSVLFFHTMRYRQTEPAHPDNDRFVLSKGHAAPLLYAAWVEAGSISEPDLLNLRTIHCDLEGHPTPRLSFVDVATGSLGQGLGAACGMAYTGKYLDKASYRVFCLLGDGESSEGSVWEALAFASHYGLDNLVAVFDVNRLGQSGVAPLKHCTDIYRNRCEAFGWNTYLVDGHDVEALCQAFSQAAQGKNKPTAIIAKTYKGRGIPNVEDAENWHGKPLPKERADEIIRLIKSQIKTNRNLLPKPPVEGSPPVSITNIKMTCLPDYKVGDKVATQKAYGLALAKLGLANERVVVLDGDPKNSTFFEIFKKEHPERFIECFAAEQNMVSVALGCATRGRTITFVTTLGAFLTRAFDQIRMGAISQSNINLIGSHCGVSVGEDGPSQMALEDLAMFRSIPNCTVFLPSDAVSTEHAVYLAANSEGMCFIRTNRSETAVIYTPQEHFEIGRAKVIRHSNNDKVTVIGAGVTLHEALAAADALSQQDISICVIDPFTIKPLDAATIISCAKATDGRVVTVEDHYQEGGIGEAVCAAVSGEPAIHVHQLSVSGVSERNRKPSELLSIFGVSARHIIAAVKYTLMN</sequence>
<organism>
    <name type="scientific">Bos taurus</name>
    <name type="common">Bovine</name>
    <dbReference type="NCBI Taxonomy" id="9913"/>
    <lineage>
        <taxon>Eukaryota</taxon>
        <taxon>Metazoa</taxon>
        <taxon>Chordata</taxon>
        <taxon>Craniata</taxon>
        <taxon>Vertebrata</taxon>
        <taxon>Euteleostomi</taxon>
        <taxon>Mammalia</taxon>
        <taxon>Eutheria</taxon>
        <taxon>Laurasiatheria</taxon>
        <taxon>Artiodactyla</taxon>
        <taxon>Ruminantia</taxon>
        <taxon>Pecora</taxon>
        <taxon>Bovidae</taxon>
        <taxon>Bovinae</taxon>
        <taxon>Bos</taxon>
    </lineage>
</organism>
<accession>Q2NKZ4</accession>
<proteinExistence type="evidence at transcript level"/>
<protein>
    <recommendedName>
        <fullName>Transketolase-like protein 2</fullName>
        <ecNumber>2.2.1.1</ecNumber>
    </recommendedName>
</protein>
<reference key="1">
    <citation type="submission" date="2005-12" db="EMBL/GenBank/DDBJ databases">
        <authorList>
            <consortium name="NIH - Mammalian Gene Collection (MGC) project"/>
        </authorList>
    </citation>
    <scope>NUCLEOTIDE SEQUENCE [LARGE SCALE MRNA]</scope>
    <source>
        <strain>Crossbred X Angus</strain>
        <tissue>Liver</tissue>
    </source>
</reference>
<dbReference type="EC" id="2.2.1.1"/>
<dbReference type="EMBL" id="BC111320">
    <property type="protein sequence ID" value="AAI11321.1"/>
    <property type="molecule type" value="mRNA"/>
</dbReference>
<dbReference type="RefSeq" id="NP_001039490.1">
    <property type="nucleotide sequence ID" value="NM_001046025.1"/>
</dbReference>
<dbReference type="SMR" id="Q2NKZ4"/>
<dbReference type="FunCoup" id="Q2NKZ4">
    <property type="interactions" value="616"/>
</dbReference>
<dbReference type="STRING" id="9913.ENSBTAP00000052271"/>
<dbReference type="PaxDb" id="9913-ENSBTAP00000052271"/>
<dbReference type="GeneID" id="509186"/>
<dbReference type="KEGG" id="bta:509186"/>
<dbReference type="CTD" id="84076"/>
<dbReference type="VEuPathDB" id="HostDB:ENSBTAG00000008947"/>
<dbReference type="eggNOG" id="KOG0523">
    <property type="taxonomic scope" value="Eukaryota"/>
</dbReference>
<dbReference type="HOGENOM" id="CLU_009227_3_0_1"/>
<dbReference type="InParanoid" id="Q2NKZ4"/>
<dbReference type="OMA" id="VRVIHVM"/>
<dbReference type="OrthoDB" id="10267175at2759"/>
<dbReference type="TreeFam" id="TF313097"/>
<dbReference type="Proteomes" id="UP000009136">
    <property type="component" value="Chromosome 6"/>
</dbReference>
<dbReference type="Bgee" id="ENSBTAG00000008947">
    <property type="expression patterns" value="Expressed in spermatid and 71 other cell types or tissues"/>
</dbReference>
<dbReference type="GO" id="GO:0005737">
    <property type="term" value="C:cytoplasm"/>
    <property type="evidence" value="ECO:0007669"/>
    <property type="project" value="UniProtKB-ARBA"/>
</dbReference>
<dbReference type="GO" id="GO:0046872">
    <property type="term" value="F:metal ion binding"/>
    <property type="evidence" value="ECO:0007669"/>
    <property type="project" value="UniProtKB-KW"/>
</dbReference>
<dbReference type="GO" id="GO:0030976">
    <property type="term" value="F:thiamine pyrophosphate binding"/>
    <property type="evidence" value="ECO:0000318"/>
    <property type="project" value="GO_Central"/>
</dbReference>
<dbReference type="GO" id="GO:0004802">
    <property type="term" value="F:transketolase activity"/>
    <property type="evidence" value="ECO:0000318"/>
    <property type="project" value="GO_Central"/>
</dbReference>
<dbReference type="CDD" id="cd07033">
    <property type="entry name" value="TPP_PYR_DXS_TK_like"/>
    <property type="match status" value="1"/>
</dbReference>
<dbReference type="CDD" id="cd02012">
    <property type="entry name" value="TPP_TK"/>
    <property type="match status" value="1"/>
</dbReference>
<dbReference type="FunFam" id="3.40.50.970:FF:000028">
    <property type="entry name" value="Transketolase isoform 1"/>
    <property type="match status" value="1"/>
</dbReference>
<dbReference type="FunFam" id="3.40.50.970:FF:000033">
    <property type="entry name" value="Transketolase isoform 1"/>
    <property type="match status" value="1"/>
</dbReference>
<dbReference type="Gene3D" id="3.40.50.920">
    <property type="match status" value="1"/>
</dbReference>
<dbReference type="Gene3D" id="3.40.50.970">
    <property type="match status" value="2"/>
</dbReference>
<dbReference type="InterPro" id="IPR029061">
    <property type="entry name" value="THDP-binding"/>
</dbReference>
<dbReference type="InterPro" id="IPR009014">
    <property type="entry name" value="Transketo_C/PFOR_II"/>
</dbReference>
<dbReference type="InterPro" id="IPR051424">
    <property type="entry name" value="Transketolase-like"/>
</dbReference>
<dbReference type="InterPro" id="IPR005475">
    <property type="entry name" value="Transketolase-like_Pyr-bd"/>
</dbReference>
<dbReference type="InterPro" id="IPR020826">
    <property type="entry name" value="Transketolase_BS"/>
</dbReference>
<dbReference type="InterPro" id="IPR033248">
    <property type="entry name" value="Transketolase_C"/>
</dbReference>
<dbReference type="InterPro" id="IPR005474">
    <property type="entry name" value="Transketolase_N"/>
</dbReference>
<dbReference type="NCBIfam" id="NF004559">
    <property type="entry name" value="PRK05899.2-5"/>
    <property type="match status" value="1"/>
</dbReference>
<dbReference type="PANTHER" id="PTHR43195">
    <property type="entry name" value="TRANSKETOLASE"/>
    <property type="match status" value="1"/>
</dbReference>
<dbReference type="PANTHER" id="PTHR43195:SF4">
    <property type="entry name" value="TRANSKETOLASE-LIKE PROTEIN 2"/>
    <property type="match status" value="1"/>
</dbReference>
<dbReference type="Pfam" id="PF02779">
    <property type="entry name" value="Transket_pyr"/>
    <property type="match status" value="1"/>
</dbReference>
<dbReference type="Pfam" id="PF02780">
    <property type="entry name" value="Transketolase_C"/>
    <property type="match status" value="1"/>
</dbReference>
<dbReference type="Pfam" id="PF00456">
    <property type="entry name" value="Transketolase_N"/>
    <property type="match status" value="1"/>
</dbReference>
<dbReference type="SMART" id="SM00861">
    <property type="entry name" value="Transket_pyr"/>
    <property type="match status" value="1"/>
</dbReference>
<dbReference type="SUPFAM" id="SSF52518">
    <property type="entry name" value="Thiamin diphosphate-binding fold (THDP-binding)"/>
    <property type="match status" value="2"/>
</dbReference>
<dbReference type="SUPFAM" id="SSF52922">
    <property type="entry name" value="TK C-terminal domain-like"/>
    <property type="match status" value="1"/>
</dbReference>
<dbReference type="PROSITE" id="PS00802">
    <property type="entry name" value="TRANSKETOLASE_2"/>
    <property type="match status" value="1"/>
</dbReference>
<name>TKTL2_BOVIN</name>
<feature type="chain" id="PRO_0000285199" description="Transketolase-like protein 2">
    <location>
        <begin position="1"/>
        <end position="626"/>
    </location>
</feature>
<feature type="active site" description="Proton donor" evidence="1">
    <location>
        <position position="369"/>
    </location>
</feature>
<feature type="binding site" evidence="1">
    <location>
        <position position="37"/>
    </location>
    <ligand>
        <name>substrate</name>
    </ligand>
</feature>
<feature type="binding site" evidence="1">
    <location>
        <position position="40"/>
    </location>
    <ligand>
        <name>thiamine diphosphate</name>
        <dbReference type="ChEBI" id="CHEBI:58937"/>
    </ligand>
</feature>
<feature type="binding site" evidence="1">
    <location>
        <position position="77"/>
    </location>
    <ligand>
        <name>thiamine diphosphate</name>
        <dbReference type="ChEBI" id="CHEBI:58937"/>
    </ligand>
</feature>
<feature type="binding site" evidence="1">
    <location>
        <begin position="123"/>
        <end position="125"/>
    </location>
    <ligand>
        <name>thiamine diphosphate</name>
        <dbReference type="ChEBI" id="CHEBI:58937"/>
    </ligand>
</feature>
<feature type="binding site" evidence="1">
    <location>
        <position position="155"/>
    </location>
    <ligand>
        <name>Mg(2+)</name>
        <dbReference type="ChEBI" id="CHEBI:18420"/>
    </ligand>
</feature>
<feature type="binding site" evidence="1">
    <location>
        <position position="156"/>
    </location>
    <ligand>
        <name>thiamine diphosphate</name>
        <dbReference type="ChEBI" id="CHEBI:58937"/>
    </ligand>
</feature>
<feature type="binding site" evidence="1">
    <location>
        <position position="185"/>
    </location>
    <ligand>
        <name>Mg(2+)</name>
        <dbReference type="ChEBI" id="CHEBI:18420"/>
    </ligand>
</feature>
<feature type="binding site" evidence="1">
    <location>
        <position position="185"/>
    </location>
    <ligand>
        <name>thiamine diphosphate</name>
        <dbReference type="ChEBI" id="CHEBI:58937"/>
    </ligand>
</feature>
<feature type="binding site" evidence="1">
    <location>
        <position position="187"/>
    </location>
    <ligand>
        <name>Mg(2+)</name>
        <dbReference type="ChEBI" id="CHEBI:18420"/>
    </ligand>
</feature>
<feature type="binding site" evidence="1">
    <location>
        <position position="247"/>
    </location>
    <ligand>
        <name>thiamine diphosphate</name>
        <dbReference type="ChEBI" id="CHEBI:58937"/>
    </ligand>
</feature>
<feature type="binding site" evidence="1">
    <location>
        <position position="261"/>
    </location>
    <ligand>
        <name>substrate</name>
    </ligand>
</feature>
<feature type="binding site" evidence="1">
    <location>
        <position position="261"/>
    </location>
    <ligand>
        <name>thiamine diphosphate</name>
        <dbReference type="ChEBI" id="CHEBI:58937"/>
    </ligand>
</feature>
<feature type="binding site" evidence="1">
    <location>
        <position position="348"/>
    </location>
    <ligand>
        <name>substrate</name>
    </ligand>
</feature>
<feature type="binding site" evidence="1">
    <location>
        <position position="369"/>
    </location>
    <ligand>
        <name>thiamine diphosphate</name>
        <dbReference type="ChEBI" id="CHEBI:58937"/>
    </ligand>
</feature>
<feature type="binding site" evidence="1">
    <location>
        <position position="395"/>
    </location>
    <ligand>
        <name>thiamine diphosphate</name>
        <dbReference type="ChEBI" id="CHEBI:58937"/>
    </ligand>
</feature>
<feature type="binding site" evidence="1">
    <location>
        <position position="419"/>
    </location>
    <ligand>
        <name>substrate</name>
    </ligand>
</feature>
<feature type="binding site" evidence="1">
    <location>
        <position position="427"/>
    </location>
    <ligand>
        <name>substrate</name>
    </ligand>
</feature>
<feature type="binding site" evidence="1">
    <location>
        <position position="431"/>
    </location>
    <ligand>
        <name>thiamine diphosphate</name>
        <dbReference type="ChEBI" id="CHEBI:58937"/>
    </ligand>
</feature>
<feature type="binding site" evidence="1">
    <location>
        <position position="477"/>
    </location>
    <ligand>
        <name>substrate</name>
    </ligand>
</feature>
<feature type="site" description="Important for catalytic activity" evidence="1">
    <location>
        <position position="37"/>
    </location>
</feature>
<feature type="site" description="Important for catalytic activity" evidence="1">
    <location>
        <position position="261"/>
    </location>
</feature>
<gene>
    <name type="primary">TKTL2</name>
</gene>
<keyword id="KW-0106">Calcium</keyword>
<keyword id="KW-0460">Magnesium</keyword>
<keyword id="KW-0479">Metal-binding</keyword>
<keyword id="KW-1185">Reference proteome</keyword>
<keyword id="KW-0786">Thiamine pyrophosphate</keyword>
<keyword id="KW-0808">Transferase</keyword>